<comment type="similarity">
    <text evidence="1">Belongs to the BshC family.</text>
</comment>
<organism>
    <name type="scientific">Christiangramia forsetii (strain DSM 17595 / CGMCC 1.15422 / KT0803)</name>
    <name type="common">Gramella forsetii</name>
    <dbReference type="NCBI Taxonomy" id="411154"/>
    <lineage>
        <taxon>Bacteria</taxon>
        <taxon>Pseudomonadati</taxon>
        <taxon>Bacteroidota</taxon>
        <taxon>Flavobacteriia</taxon>
        <taxon>Flavobacteriales</taxon>
        <taxon>Flavobacteriaceae</taxon>
        <taxon>Christiangramia</taxon>
    </lineage>
</organism>
<proteinExistence type="inferred from homology"/>
<reference key="1">
    <citation type="journal article" date="2006" name="Environ. Microbiol.">
        <title>Whole genome analysis of the marine Bacteroidetes'Gramella forsetii' reveals adaptations to degradation of polymeric organic matter.</title>
        <authorList>
            <person name="Bauer M."/>
            <person name="Kube M."/>
            <person name="Teeling H."/>
            <person name="Richter M."/>
            <person name="Lombardot T."/>
            <person name="Allers E."/>
            <person name="Wuerdemann C.A."/>
            <person name="Quast C."/>
            <person name="Kuhl H."/>
            <person name="Knaust F."/>
            <person name="Woebken D."/>
            <person name="Bischof K."/>
            <person name="Mussmann M."/>
            <person name="Choudhuri J.V."/>
            <person name="Meyer F."/>
            <person name="Reinhardt R."/>
            <person name="Amann R.I."/>
            <person name="Gloeckner F.O."/>
        </authorList>
    </citation>
    <scope>NUCLEOTIDE SEQUENCE [LARGE SCALE GENOMIC DNA]</scope>
    <source>
        <strain>DSM 17595 / CGMCC 1.15422 / KT0803</strain>
    </source>
</reference>
<name>BSHC_CHRFK</name>
<sequence>MPTNCISYPETNYFTPLILDYLSEKKELSNFYHRFPEIENFGAQITEKKKSYDHTIRKDLIQVLNDQYSKLTVSENTRANIDALESKNTFTVVTGHQLNLFTGPLYFLYKIISTINLTKKLKEKYPENNFVPIYWMATEDHDFEEINFFNLNGKKFKWNNADDRAGKTAVGGLSTEGLDEVFKLFSAEIGGGENAEFLKSTFEKGYLEHDTLSDATRFIANEIFGKYGLVIVAAGDKRLKKHFIPNVGSELVEHSSHKQTTETLQKINSLGYNIQVNPRDINLFYLTDEIRERIIERDGNYFVHETEISWTKEEILQELKDHPERFSPNVMTRPLYQEVILPNLCYIGGGGELAYWLELKSYFEAENVTFPMLLLRNSAMLQTGKQNDKREKLKISIQELFLKQHELINRKVRKISDIDIDFSGQKEHLVEQFQHMYDLAEKTDESFIGAVKAQEVKQLKGLDHLEKRLLKAQKRKLKDEVERIAELQNDLFPNRSLQERQTNFSEFYVEYGEELINKLMEELDPLESNFKILTFGRE</sequence>
<evidence type="ECO:0000255" key="1">
    <source>
        <dbReference type="HAMAP-Rule" id="MF_01867"/>
    </source>
</evidence>
<keyword id="KW-0175">Coiled coil</keyword>
<keyword id="KW-0436">Ligase</keyword>
<gene>
    <name evidence="1" type="primary">bshC</name>
    <name type="ordered locus">GFO_2232</name>
</gene>
<feature type="chain" id="PRO_0000378240" description="Putative cysteine ligase BshC">
    <location>
        <begin position="1"/>
        <end position="538"/>
    </location>
</feature>
<feature type="coiled-coil region" evidence="1">
    <location>
        <begin position="462"/>
        <end position="533"/>
    </location>
</feature>
<protein>
    <recommendedName>
        <fullName evidence="1">Putative cysteine ligase BshC</fullName>
        <ecNumber evidence="1">6.-.-.-</ecNumber>
    </recommendedName>
</protein>
<dbReference type="EC" id="6.-.-.-" evidence="1"/>
<dbReference type="EMBL" id="CU207366">
    <property type="protein sequence ID" value="CAL67197.1"/>
    <property type="molecule type" value="Genomic_DNA"/>
</dbReference>
<dbReference type="RefSeq" id="WP_011710100.1">
    <property type="nucleotide sequence ID" value="NC_008571.1"/>
</dbReference>
<dbReference type="SMR" id="A0M3K2"/>
<dbReference type="STRING" id="411154.GFO_2232"/>
<dbReference type="KEGG" id="gfo:GFO_2232"/>
<dbReference type="eggNOG" id="COG4365">
    <property type="taxonomic scope" value="Bacteria"/>
</dbReference>
<dbReference type="HOGENOM" id="CLU_022249_2_0_10"/>
<dbReference type="OrthoDB" id="9765151at2"/>
<dbReference type="Proteomes" id="UP000000755">
    <property type="component" value="Chromosome"/>
</dbReference>
<dbReference type="GO" id="GO:0016874">
    <property type="term" value="F:ligase activity"/>
    <property type="evidence" value="ECO:0007669"/>
    <property type="project" value="UniProtKB-UniRule"/>
</dbReference>
<dbReference type="HAMAP" id="MF_01867">
    <property type="entry name" value="BshC"/>
    <property type="match status" value="1"/>
</dbReference>
<dbReference type="InterPro" id="IPR011199">
    <property type="entry name" value="Bacillithiol_biosynth_BshC"/>
</dbReference>
<dbReference type="InterPro" id="IPR055399">
    <property type="entry name" value="CC_BshC"/>
</dbReference>
<dbReference type="InterPro" id="IPR055398">
    <property type="entry name" value="Rossmann-like_BshC"/>
</dbReference>
<dbReference type="NCBIfam" id="TIGR03998">
    <property type="entry name" value="thiol_BshC"/>
    <property type="match status" value="1"/>
</dbReference>
<dbReference type="Pfam" id="PF24850">
    <property type="entry name" value="CC_BshC"/>
    <property type="match status" value="1"/>
</dbReference>
<dbReference type="Pfam" id="PF10079">
    <property type="entry name" value="Rossmann-like_BshC"/>
    <property type="match status" value="1"/>
</dbReference>
<dbReference type="PIRSF" id="PIRSF012535">
    <property type="entry name" value="UCP012535"/>
    <property type="match status" value="1"/>
</dbReference>
<accession>A0M3K2</accession>